<comment type="function">
    <text evidence="3 4 5 6">Probable divalent metal ion transporter which regulates the uptake of several heavy metals such as Mn(2+), Al(3+) and iron (PubMed:19785996, PubMed:19924247, PubMed:22194696, PubMed:23106139). Plays a role in modulating Al(3+)-induced dopamine (DA) neuron degeneration through the intracellular sequestration of Al(3+) (PubMed:23106139).</text>
</comment>
<comment type="subcellular location">
    <subcellularLocation>
        <location evidence="4">Apical cell membrane</location>
        <topology evidence="1">Multi-pass membrane protein</topology>
    </subcellularLocation>
    <subcellularLocation>
        <location evidence="4 6">Cytoplasmic vesicle membrane</location>
    </subcellularLocation>
    <text evidence="4 6">Translocates to apical cytoplasmic vesicles in intestine in response to high Mn(2+) levels (PubMed:19924247). In dopaminergic neurons, localizes to cytoplasmic vesicles (PubMed:23106139).</text>
</comment>
<comment type="tissue specificity">
    <text evidence="3 4 6">Expressed in dopaminergic neurons (at protein level) (PubMed:23106139). Expressed in intestine with a weaker expression in the most proximal and distal regions (PubMed:19785996, PubMed:19924247). Weakly expressed in the hyp1-6, hyp7 and hyp8-12 hypodermis and in head and tail neurons (PubMed:19924247).</text>
</comment>
<comment type="induction">
    <text evidence="3 4 5 6">Induced by pathogenic bacterium S.aureus (PubMed:19785996). Repressed by high levels of Mn(2+) (PubMed:19924247). Repressed by high levels of Al(3+) (PubMed:23106139). Induced by low iron levels (PubMed:22194696).</text>
</comment>
<comment type="disruption phenotype">
    <text evidence="3 4 5 6">Increased survival rate and reduced body levels of iron in response to increasing Mn(2+) levels (PubMed:19924247). Reduced survival rate in response to high Mn(2+) levels or to infection mediated by pathogenic bacterium S.aureus (PubMed:19785996). Reduced CEP neuron death and higher Al(3+) accumulation in the body in response to high Al(3+) levels (PubMed:23106139). Reduced ferritin ftn-1 mRNA levels and Mn(2+) and iron body levels (PubMed:22194696). Increased sfm-1, sfm-2 and sfm-3 mRNA levels (PubMed:19924247).</text>
</comment>
<comment type="similarity">
    <text evidence="8">Belongs to the NRAMP family.</text>
</comment>
<keyword id="KW-1003">Cell membrane</keyword>
<keyword id="KW-0968">Cytoplasmic vesicle</keyword>
<keyword id="KW-0325">Glycoprotein</keyword>
<keyword id="KW-0406">Ion transport</keyword>
<keyword id="KW-0408">Iron</keyword>
<keyword id="KW-0410">Iron transport</keyword>
<keyword id="KW-0472">Membrane</keyword>
<keyword id="KW-1185">Reference proteome</keyword>
<keyword id="KW-0812">Transmembrane</keyword>
<keyword id="KW-1133">Transmembrane helix</keyword>
<keyword id="KW-0813">Transport</keyword>
<gene>
    <name evidence="11" type="primary">smf-3</name>
    <name evidence="9" type="ORF">Y69A2AR.4</name>
</gene>
<evidence type="ECO:0000255" key="1"/>
<evidence type="ECO:0000255" key="2">
    <source>
        <dbReference type="PROSITE-ProRule" id="PRU00498"/>
    </source>
</evidence>
<evidence type="ECO:0000269" key="3">
    <source>
    </source>
</evidence>
<evidence type="ECO:0000269" key="4">
    <source>
    </source>
</evidence>
<evidence type="ECO:0000269" key="5">
    <source>
    </source>
</evidence>
<evidence type="ECO:0000269" key="6">
    <source>
    </source>
</evidence>
<evidence type="ECO:0000303" key="7">
    <source>
    </source>
</evidence>
<evidence type="ECO:0000305" key="8"/>
<evidence type="ECO:0000312" key="9">
    <source>
        <dbReference type="EMBL" id="CCD74141.1"/>
    </source>
</evidence>
<evidence type="ECO:0000312" key="10">
    <source>
        <dbReference type="Proteomes" id="UP000001940"/>
    </source>
</evidence>
<evidence type="ECO:0000312" key="11">
    <source>
        <dbReference type="WormBase" id="Y69A2AR.4"/>
    </source>
</evidence>
<reference evidence="10" key="1">
    <citation type="journal article" date="1998" name="Science">
        <title>Genome sequence of the nematode C. elegans: a platform for investigating biology.</title>
        <authorList>
            <consortium name="The C. elegans sequencing consortium"/>
        </authorList>
    </citation>
    <scope>NUCLEOTIDE SEQUENCE [LARGE SCALE GENOMIC DNA]</scope>
    <source>
        <strain evidence="10">Bristol N2</strain>
    </source>
</reference>
<reference evidence="8" key="2">
    <citation type="journal article" date="2009" name="Biochem. Biophys. Res. Commun.">
        <title>Functional assessment of Nramp-like metal transporters and manganese in Caenorhabditis elegans.</title>
        <authorList>
            <person name="Bandyopadhyay J."/>
            <person name="Song H.O."/>
            <person name="Park B.J."/>
            <person name="Singaravelu G."/>
            <person name="Sun J.L."/>
            <person name="Ahnn J."/>
            <person name="Cho J.H."/>
        </authorList>
    </citation>
    <scope>FUNCTION</scope>
    <scope>TISSUE SPECIFICITY</scope>
    <scope>INDUCTION BY BACTERIA</scope>
    <scope>DISRUPTION PHENOTYPE</scope>
</reference>
<reference evidence="8" key="3">
    <citation type="journal article" date="2009" name="PLoS ONE">
        <title>SMF-1, SMF-2 and SMF-3 DMT1 orthologues regulate and are regulated differentially by manganese levels in C. elegans.</title>
        <authorList>
            <person name="Au C."/>
            <person name="Benedetto A."/>
            <person name="Anderson J."/>
            <person name="Labrousse A."/>
            <person name="Erikson K."/>
            <person name="Ewbank J.J."/>
            <person name="Aschner M."/>
        </authorList>
    </citation>
    <scope>FUNCTION</scope>
    <scope>SUBCELLULAR LOCATION</scope>
    <scope>TISSUE SPECIFICITY</scope>
    <scope>INDUCTION BY MANGANESE</scope>
    <scope>DISRUPTION PHENOTYPE</scope>
</reference>
<reference evidence="8" key="4">
    <citation type="journal article" date="2011" name="PLoS Genet.">
        <title>HIF-1 regulates iron homeostasis in Caenorhabditis elegans by activation and inhibition of genes involved in iron uptake and storage.</title>
        <authorList>
            <person name="Romney S.J."/>
            <person name="Newman B.S."/>
            <person name="Thacker C."/>
            <person name="Leibold E.A."/>
        </authorList>
    </citation>
    <scope>FUNCTION</scope>
    <scope>INDUCTION BY IRON</scope>
    <scope>DISRUPTION PHENOTYPE</scope>
</reference>
<reference evidence="8" key="5">
    <citation type="journal article" date="2013" name="J. Neurochem.">
        <title>The metal transporter SMF-3/DMT-1 mediates aluminum-induced dopamine neuron degeneration.</title>
        <authorList>
            <person name="VanDuyn N."/>
            <person name="Settivari R."/>
            <person name="LeVora J."/>
            <person name="Zhou S."/>
            <person name="Unrine J."/>
            <person name="Nass R."/>
        </authorList>
    </citation>
    <scope>FUNCTION</scope>
    <scope>SUBCELLULAR LOCATION</scope>
    <scope>TISSUE SPECIFICITY</scope>
    <scope>INDUCTION BY ALUMINUM</scope>
    <scope>DISRUPTION PHENOTYPE</scope>
</reference>
<feature type="chain" id="PRO_0000437466" description="NRAMP-like transporter smf-3" evidence="8">
    <location>
        <begin position="1"/>
        <end position="560"/>
    </location>
</feature>
<feature type="topological domain" description="Cytoplasmic" evidence="8">
    <location>
        <begin position="1"/>
        <end position="43"/>
    </location>
</feature>
<feature type="transmembrane region" description="Helical" evidence="1">
    <location>
        <begin position="44"/>
        <end position="64"/>
    </location>
</feature>
<feature type="topological domain" description="Extracellular" evidence="8">
    <location>
        <begin position="65"/>
        <end position="71"/>
    </location>
</feature>
<feature type="transmembrane region" description="Helical" evidence="1">
    <location>
        <begin position="72"/>
        <end position="92"/>
    </location>
</feature>
<feature type="topological domain" description="Cytoplasmic" evidence="8">
    <location>
        <begin position="93"/>
        <end position="120"/>
    </location>
</feature>
<feature type="transmembrane region" description="Helical" evidence="1">
    <location>
        <begin position="121"/>
        <end position="141"/>
    </location>
</feature>
<feature type="topological domain" description="Extracellular" evidence="8">
    <location>
        <begin position="142"/>
        <end position="152"/>
    </location>
</feature>
<feature type="transmembrane region" description="Helical" evidence="1">
    <location>
        <begin position="153"/>
        <end position="173"/>
    </location>
</feature>
<feature type="topological domain" description="Cytoplasmic" evidence="8">
    <location>
        <begin position="174"/>
        <end position="182"/>
    </location>
</feature>
<feature type="transmembrane region" description="Helical" evidence="1">
    <location>
        <begin position="183"/>
        <end position="203"/>
    </location>
</feature>
<feature type="topological domain" description="Extracellular" evidence="8">
    <location>
        <begin position="204"/>
        <end position="229"/>
    </location>
</feature>
<feature type="transmembrane region" description="Helical" evidence="1">
    <location>
        <begin position="230"/>
        <end position="250"/>
    </location>
</feature>
<feature type="topological domain" description="Cytoplasmic" evidence="8">
    <location>
        <begin position="251"/>
        <end position="268"/>
    </location>
</feature>
<feature type="transmembrane region" description="Helical" evidence="1">
    <location>
        <begin position="269"/>
        <end position="289"/>
    </location>
</feature>
<feature type="topological domain" description="Extracellular" evidence="8">
    <location>
        <begin position="290"/>
        <end position="339"/>
    </location>
</feature>
<feature type="transmembrane region" description="Helical" evidence="1">
    <location>
        <begin position="340"/>
        <end position="360"/>
    </location>
</feature>
<feature type="topological domain" description="Cytoplasmic" evidence="8">
    <location>
        <begin position="361"/>
        <end position="390"/>
    </location>
</feature>
<feature type="transmembrane region" description="Helical" evidence="1">
    <location>
        <begin position="391"/>
        <end position="411"/>
    </location>
</feature>
<feature type="topological domain" description="Extracellular" evidence="8">
    <location>
        <begin position="412"/>
        <end position="420"/>
    </location>
</feature>
<feature type="transmembrane region" description="Helical" evidence="1">
    <location>
        <begin position="421"/>
        <end position="441"/>
    </location>
</feature>
<feature type="topological domain" description="Cytoplasmic" evidence="8">
    <location>
        <begin position="442"/>
        <end position="458"/>
    </location>
</feature>
<feature type="transmembrane region" description="Helical" evidence="1">
    <location>
        <begin position="459"/>
        <end position="479"/>
    </location>
</feature>
<feature type="topological domain" description="Extracellular" evidence="8">
    <location>
        <begin position="480"/>
        <end position="486"/>
    </location>
</feature>
<feature type="transmembrane region" description="Helical" evidence="1">
    <location>
        <begin position="487"/>
        <end position="507"/>
    </location>
</feature>
<feature type="topological domain" description="Cytoplasmic" evidence="8">
    <location>
        <begin position="508"/>
        <end position="560"/>
    </location>
</feature>
<feature type="glycosylation site" description="N-linked (GlcNAc...) asparagine" evidence="2">
    <location>
        <position position="310"/>
    </location>
</feature>
<feature type="glycosylation site" description="N-linked (GlcNAc...) asparagine" evidence="2">
    <location>
        <position position="414"/>
    </location>
</feature>
<protein>
    <recommendedName>
        <fullName evidence="8">NRAMP-like transporter smf-3</fullName>
    </recommendedName>
    <alternativeName>
        <fullName evidence="7">DMT-1</fullName>
    </alternativeName>
    <alternativeName>
        <fullName evidence="8">Divalent metal transporter smf-3</fullName>
    </alternativeName>
</protein>
<organism evidence="10">
    <name type="scientific">Caenorhabditis elegans</name>
    <dbReference type="NCBI Taxonomy" id="6239"/>
    <lineage>
        <taxon>Eukaryota</taxon>
        <taxon>Metazoa</taxon>
        <taxon>Ecdysozoa</taxon>
        <taxon>Nematoda</taxon>
        <taxon>Chromadorea</taxon>
        <taxon>Rhabditida</taxon>
        <taxon>Rhabditina</taxon>
        <taxon>Rhabditomorpha</taxon>
        <taxon>Rhabditoidea</taxon>
        <taxon>Rhabditidae</taxon>
        <taxon>Peloderinae</taxon>
        <taxon>Caenorhabditis</taxon>
    </lineage>
</organism>
<name>NRAMC_CAEEL</name>
<dbReference type="EMBL" id="BX284604">
    <property type="protein sequence ID" value="CCD74141.1"/>
    <property type="molecule type" value="Genomic_DNA"/>
</dbReference>
<dbReference type="RefSeq" id="NP_500235.4">
    <property type="nucleotide sequence ID" value="NM_067834.4"/>
</dbReference>
<dbReference type="SMR" id="Q95XG8"/>
<dbReference type="FunCoup" id="Q95XG8">
    <property type="interactions" value="134"/>
</dbReference>
<dbReference type="STRING" id="6239.Y69A2AR.4.1"/>
<dbReference type="TCDB" id="2.A.55.2.15">
    <property type="family name" value="the metal ion (mn(2+)-iron) transporter (nramp) family"/>
</dbReference>
<dbReference type="GlyCosmos" id="Q95XG8">
    <property type="glycosylation" value="2 sites, No reported glycans"/>
</dbReference>
<dbReference type="PaxDb" id="6239-Y69A2AR.4"/>
<dbReference type="EnsemblMetazoa" id="Y69A2AR.4.1">
    <property type="protein sequence ID" value="Y69A2AR.4.1"/>
    <property type="gene ID" value="WBGene00004878"/>
</dbReference>
<dbReference type="EnsemblMetazoa" id="Y69A2AR.4.2">
    <property type="protein sequence ID" value="Y69A2AR.4.2"/>
    <property type="gene ID" value="WBGene00004878"/>
</dbReference>
<dbReference type="GeneID" id="177044"/>
<dbReference type="KEGG" id="cel:CELE_Y69A2AR.4"/>
<dbReference type="UCSC" id="Y69A2AR.4">
    <property type="organism name" value="c. elegans"/>
</dbReference>
<dbReference type="AGR" id="WB:WBGene00004878"/>
<dbReference type="CTD" id="177044"/>
<dbReference type="WormBase" id="Y69A2AR.4">
    <property type="protein sequence ID" value="CE46127"/>
    <property type="gene ID" value="WBGene00004878"/>
    <property type="gene designation" value="smf-3"/>
</dbReference>
<dbReference type="eggNOG" id="KOG1291">
    <property type="taxonomic scope" value="Eukaryota"/>
</dbReference>
<dbReference type="eggNOG" id="KOG3923">
    <property type="taxonomic scope" value="Eukaryota"/>
</dbReference>
<dbReference type="HOGENOM" id="CLU_020088_5_2_1"/>
<dbReference type="InParanoid" id="Q95XG8"/>
<dbReference type="OMA" id="KMCFNYF"/>
<dbReference type="OrthoDB" id="409173at2759"/>
<dbReference type="PhylomeDB" id="Q95XG8"/>
<dbReference type="Reactome" id="R-CEL-1222556">
    <property type="pathway name" value="ROS and RNS production in phagocytes"/>
</dbReference>
<dbReference type="Reactome" id="R-CEL-425410">
    <property type="pathway name" value="Metal ion SLC transporters"/>
</dbReference>
<dbReference type="Reactome" id="R-CEL-6798695">
    <property type="pathway name" value="Neutrophil degranulation"/>
</dbReference>
<dbReference type="Reactome" id="R-CEL-6803544">
    <property type="pathway name" value="Ion influx/efflux at host-pathogen interface"/>
</dbReference>
<dbReference type="PRO" id="PR:Q95XG8"/>
<dbReference type="Proteomes" id="UP000001940">
    <property type="component" value="Chromosome IV"/>
</dbReference>
<dbReference type="Bgee" id="WBGene00004878">
    <property type="expression patterns" value="Expressed in larva and 1 other cell type or tissue"/>
</dbReference>
<dbReference type="GO" id="GO:0016324">
    <property type="term" value="C:apical plasma membrane"/>
    <property type="evidence" value="ECO:0000314"/>
    <property type="project" value="WormBase"/>
</dbReference>
<dbReference type="GO" id="GO:0010008">
    <property type="term" value="C:endosome membrane"/>
    <property type="evidence" value="ECO:0000318"/>
    <property type="project" value="GO_Central"/>
</dbReference>
<dbReference type="GO" id="GO:0031090">
    <property type="term" value="C:organelle membrane"/>
    <property type="evidence" value="ECO:0000314"/>
    <property type="project" value="WormBase"/>
</dbReference>
<dbReference type="GO" id="GO:0005886">
    <property type="term" value="C:plasma membrane"/>
    <property type="evidence" value="ECO:0000318"/>
    <property type="project" value="GO_Central"/>
</dbReference>
<dbReference type="GO" id="GO:0015086">
    <property type="term" value="F:cadmium ion transmembrane transporter activity"/>
    <property type="evidence" value="ECO:0000318"/>
    <property type="project" value="GO_Central"/>
</dbReference>
<dbReference type="GO" id="GO:0005381">
    <property type="term" value="F:iron ion transmembrane transporter activity"/>
    <property type="evidence" value="ECO:0000318"/>
    <property type="project" value="GO_Central"/>
</dbReference>
<dbReference type="GO" id="GO:0005384">
    <property type="term" value="F:manganese ion transmembrane transporter activity"/>
    <property type="evidence" value="ECO:0000318"/>
    <property type="project" value="GO_Central"/>
</dbReference>
<dbReference type="GO" id="GO:0046915">
    <property type="term" value="F:transition metal ion transmembrane transporter activity"/>
    <property type="evidence" value="ECO:0000250"/>
    <property type="project" value="WormBase"/>
</dbReference>
<dbReference type="GO" id="GO:0050829">
    <property type="term" value="P:defense response to Gram-negative bacterium"/>
    <property type="evidence" value="ECO:0000315"/>
    <property type="project" value="UniProtKB"/>
</dbReference>
<dbReference type="GO" id="GO:0006879">
    <property type="term" value="P:intracellular iron ion homeostasis"/>
    <property type="evidence" value="ECO:0000315"/>
    <property type="project" value="WormBase"/>
</dbReference>
<dbReference type="GO" id="GO:0033212">
    <property type="term" value="P:iron import into cell"/>
    <property type="evidence" value="ECO:0000315"/>
    <property type="project" value="UniProtKB"/>
</dbReference>
<dbReference type="GO" id="GO:0034755">
    <property type="term" value="P:iron ion transmembrane transport"/>
    <property type="evidence" value="ECO:0000318"/>
    <property type="project" value="GO_Central"/>
</dbReference>
<dbReference type="GO" id="GO:0055071">
    <property type="term" value="P:manganese ion homeostasis"/>
    <property type="evidence" value="ECO:0000315"/>
    <property type="project" value="WormBase"/>
</dbReference>
<dbReference type="GO" id="GO:0006828">
    <property type="term" value="P:manganese ion transport"/>
    <property type="evidence" value="ECO:0000318"/>
    <property type="project" value="GO_Central"/>
</dbReference>
<dbReference type="GO" id="GO:0010042">
    <property type="term" value="P:response to manganese ion"/>
    <property type="evidence" value="ECO:0000315"/>
    <property type="project" value="WormBase"/>
</dbReference>
<dbReference type="GO" id="GO:0010038">
    <property type="term" value="P:response to metal ion"/>
    <property type="evidence" value="ECO:0000316"/>
    <property type="project" value="WormBase"/>
</dbReference>
<dbReference type="GO" id="GO:0006979">
    <property type="term" value="P:response to oxidative stress"/>
    <property type="evidence" value="ECO:0000315"/>
    <property type="project" value="WormBase"/>
</dbReference>
<dbReference type="GO" id="GO:0000041">
    <property type="term" value="P:transition metal ion transport"/>
    <property type="evidence" value="ECO:0000250"/>
    <property type="project" value="WormBase"/>
</dbReference>
<dbReference type="HAMAP" id="MF_00221">
    <property type="entry name" value="NRAMP"/>
    <property type="match status" value="1"/>
</dbReference>
<dbReference type="InterPro" id="IPR001046">
    <property type="entry name" value="NRAMP_fam"/>
</dbReference>
<dbReference type="NCBIfam" id="TIGR01197">
    <property type="entry name" value="nramp"/>
    <property type="match status" value="1"/>
</dbReference>
<dbReference type="NCBIfam" id="NF037982">
    <property type="entry name" value="Nramp_1"/>
    <property type="match status" value="1"/>
</dbReference>
<dbReference type="PANTHER" id="PTHR11706:SF32">
    <property type="entry name" value="NRAMP-LIKE TRANSPORTER SMF-3"/>
    <property type="match status" value="1"/>
</dbReference>
<dbReference type="PANTHER" id="PTHR11706">
    <property type="entry name" value="SOLUTE CARRIER PROTEIN FAMILY 11 MEMBER"/>
    <property type="match status" value="1"/>
</dbReference>
<dbReference type="Pfam" id="PF01566">
    <property type="entry name" value="Nramp"/>
    <property type="match status" value="1"/>
</dbReference>
<dbReference type="PRINTS" id="PR00447">
    <property type="entry name" value="NATRESASSCMP"/>
</dbReference>
<sequence>MEGEMKCPIEEIREKPEMRKAQQTYEVQVEVEDTPDTTFSWRKLWAFTGPGFLMSIAYLDPGNIESDLQAGAISYFKLIWVLLVAHIMGLLLQRLAARLGVVSGKHMAEIAFSYYPKIPRLVLWMLVESAIVGSDMQEVIGTAISFYLLSNGVIPLWAGVLITICDTFTFLFLEKYGVRKFEAFFCFLITCMAITFGYEFGVSAPDAGKMFSGMFVPWCNGCDNNMVMQGVAIIGAVIMPHNFYLHSALVKSRRVDRRRAEKVTEANKYFFIESAFALFVSFIINTLVISVFAQGMYGKTNQDIRDTCYNNTHNGMPDFYKVEFPANNDAAQSDIYHAGIFLGCTFGIFALYVWAVGILAAGQSSTMTGTYAGQFAMEGFIQIKLPQWKRILITRSLAILPTLAVVIFSGGIDNISSLNDFLNCLQLIQLPFALIPVLTFVSDRNIMHEYKLASVSKVVSIVISLIILFINFYFLYSWIGSTFGYNAVSIPITIFCAIFYIIFIAYLTYYCLVAMEFISPIQTKWLAEPIYHDFDAPWLEDSENPSTKNTISDDELSMRY</sequence>
<accession>Q95XG8</accession>
<proteinExistence type="evidence at protein level"/>